<dbReference type="EC" id="3.4.11.1" evidence="1"/>
<dbReference type="EC" id="3.4.11.10" evidence="1"/>
<dbReference type="EMBL" id="CP000789">
    <property type="protein sequence ID" value="ABU72549.1"/>
    <property type="molecule type" value="Genomic_DNA"/>
</dbReference>
<dbReference type="RefSeq" id="WP_010648061.1">
    <property type="nucleotide sequence ID" value="NC_022269.1"/>
</dbReference>
<dbReference type="SMR" id="A7MSE5"/>
<dbReference type="MEROPS" id="M17.003"/>
<dbReference type="KEGG" id="vha:VIBHAR_03635"/>
<dbReference type="PATRIC" id="fig|338187.25.peg.2599"/>
<dbReference type="Proteomes" id="UP000008152">
    <property type="component" value="Chromosome I"/>
</dbReference>
<dbReference type="GO" id="GO:0005737">
    <property type="term" value="C:cytoplasm"/>
    <property type="evidence" value="ECO:0007669"/>
    <property type="project" value="UniProtKB-SubCell"/>
</dbReference>
<dbReference type="GO" id="GO:0030145">
    <property type="term" value="F:manganese ion binding"/>
    <property type="evidence" value="ECO:0007669"/>
    <property type="project" value="UniProtKB-UniRule"/>
</dbReference>
<dbReference type="GO" id="GO:0070006">
    <property type="term" value="F:metalloaminopeptidase activity"/>
    <property type="evidence" value="ECO:0007669"/>
    <property type="project" value="InterPro"/>
</dbReference>
<dbReference type="GO" id="GO:0006508">
    <property type="term" value="P:proteolysis"/>
    <property type="evidence" value="ECO:0007669"/>
    <property type="project" value="UniProtKB-KW"/>
</dbReference>
<dbReference type="CDD" id="cd00433">
    <property type="entry name" value="Peptidase_M17"/>
    <property type="match status" value="1"/>
</dbReference>
<dbReference type="FunFam" id="3.40.220.10:FF:000001">
    <property type="entry name" value="Probable cytosol aminopeptidase"/>
    <property type="match status" value="1"/>
</dbReference>
<dbReference type="FunFam" id="3.40.630.10:FF:000004">
    <property type="entry name" value="Probable cytosol aminopeptidase"/>
    <property type="match status" value="1"/>
</dbReference>
<dbReference type="Gene3D" id="3.40.220.10">
    <property type="entry name" value="Leucine Aminopeptidase, subunit E, domain 1"/>
    <property type="match status" value="1"/>
</dbReference>
<dbReference type="Gene3D" id="3.40.630.10">
    <property type="entry name" value="Zn peptidases"/>
    <property type="match status" value="1"/>
</dbReference>
<dbReference type="HAMAP" id="MF_00181">
    <property type="entry name" value="Cytosol_peptidase_M17"/>
    <property type="match status" value="1"/>
</dbReference>
<dbReference type="InterPro" id="IPR011356">
    <property type="entry name" value="Leucine_aapep/pepB"/>
</dbReference>
<dbReference type="InterPro" id="IPR043472">
    <property type="entry name" value="Macro_dom-like"/>
</dbReference>
<dbReference type="InterPro" id="IPR000819">
    <property type="entry name" value="Peptidase_M17_C"/>
</dbReference>
<dbReference type="InterPro" id="IPR023042">
    <property type="entry name" value="Peptidase_M17_leu_NH2_pept"/>
</dbReference>
<dbReference type="InterPro" id="IPR008283">
    <property type="entry name" value="Peptidase_M17_N"/>
</dbReference>
<dbReference type="NCBIfam" id="NF002072">
    <property type="entry name" value="PRK00913.1-1"/>
    <property type="match status" value="1"/>
</dbReference>
<dbReference type="NCBIfam" id="NF002073">
    <property type="entry name" value="PRK00913.1-2"/>
    <property type="match status" value="1"/>
</dbReference>
<dbReference type="NCBIfam" id="NF002074">
    <property type="entry name" value="PRK00913.1-4"/>
    <property type="match status" value="1"/>
</dbReference>
<dbReference type="PANTHER" id="PTHR11963:SF23">
    <property type="entry name" value="CYTOSOL AMINOPEPTIDASE"/>
    <property type="match status" value="1"/>
</dbReference>
<dbReference type="PANTHER" id="PTHR11963">
    <property type="entry name" value="LEUCINE AMINOPEPTIDASE-RELATED"/>
    <property type="match status" value="1"/>
</dbReference>
<dbReference type="Pfam" id="PF00883">
    <property type="entry name" value="Peptidase_M17"/>
    <property type="match status" value="1"/>
</dbReference>
<dbReference type="Pfam" id="PF02789">
    <property type="entry name" value="Peptidase_M17_N"/>
    <property type="match status" value="1"/>
</dbReference>
<dbReference type="PRINTS" id="PR00481">
    <property type="entry name" value="LAMNOPPTDASE"/>
</dbReference>
<dbReference type="SUPFAM" id="SSF52949">
    <property type="entry name" value="Macro domain-like"/>
    <property type="match status" value="1"/>
</dbReference>
<dbReference type="SUPFAM" id="SSF53187">
    <property type="entry name" value="Zn-dependent exopeptidases"/>
    <property type="match status" value="1"/>
</dbReference>
<dbReference type="PROSITE" id="PS00631">
    <property type="entry name" value="CYTOSOL_AP"/>
    <property type="match status" value="1"/>
</dbReference>
<feature type="chain" id="PRO_1000019998" description="Probable cytosol aminopeptidase">
    <location>
        <begin position="1"/>
        <end position="502"/>
    </location>
</feature>
<feature type="active site" evidence="1">
    <location>
        <position position="281"/>
    </location>
</feature>
<feature type="active site" evidence="1">
    <location>
        <position position="355"/>
    </location>
</feature>
<feature type="binding site" evidence="1">
    <location>
        <position position="269"/>
    </location>
    <ligand>
        <name>Mn(2+)</name>
        <dbReference type="ChEBI" id="CHEBI:29035"/>
        <label>2</label>
    </ligand>
</feature>
<feature type="binding site" evidence="1">
    <location>
        <position position="274"/>
    </location>
    <ligand>
        <name>Mn(2+)</name>
        <dbReference type="ChEBI" id="CHEBI:29035"/>
        <label>1</label>
    </ligand>
</feature>
<feature type="binding site" evidence="1">
    <location>
        <position position="274"/>
    </location>
    <ligand>
        <name>Mn(2+)</name>
        <dbReference type="ChEBI" id="CHEBI:29035"/>
        <label>2</label>
    </ligand>
</feature>
<feature type="binding site" evidence="1">
    <location>
        <position position="292"/>
    </location>
    <ligand>
        <name>Mn(2+)</name>
        <dbReference type="ChEBI" id="CHEBI:29035"/>
        <label>2</label>
    </ligand>
</feature>
<feature type="binding site" evidence="1">
    <location>
        <position position="351"/>
    </location>
    <ligand>
        <name>Mn(2+)</name>
        <dbReference type="ChEBI" id="CHEBI:29035"/>
        <label>1</label>
    </ligand>
</feature>
<feature type="binding site" evidence="1">
    <location>
        <position position="353"/>
    </location>
    <ligand>
        <name>Mn(2+)</name>
        <dbReference type="ChEBI" id="CHEBI:29035"/>
        <label>1</label>
    </ligand>
</feature>
<feature type="binding site" evidence="1">
    <location>
        <position position="353"/>
    </location>
    <ligand>
        <name>Mn(2+)</name>
        <dbReference type="ChEBI" id="CHEBI:29035"/>
        <label>2</label>
    </ligand>
</feature>
<comment type="function">
    <text evidence="1">Presumably involved in the processing and regular turnover of intracellular proteins. Catalyzes the removal of unsubstituted N-terminal amino acids from various peptides.</text>
</comment>
<comment type="catalytic activity">
    <reaction evidence="1">
        <text>Release of an N-terminal amino acid, Xaa-|-Yaa-, in which Xaa is preferably Leu, but may be other amino acids including Pro although not Arg or Lys, and Yaa may be Pro. Amino acid amides and methyl esters are also readily hydrolyzed, but rates on arylamides are exceedingly low.</text>
        <dbReference type="EC" id="3.4.11.1"/>
    </reaction>
</comment>
<comment type="catalytic activity">
    <reaction evidence="1">
        <text>Release of an N-terminal amino acid, preferentially leucine, but not glutamic or aspartic acids.</text>
        <dbReference type="EC" id="3.4.11.10"/>
    </reaction>
</comment>
<comment type="cofactor">
    <cofactor evidence="1">
        <name>Mn(2+)</name>
        <dbReference type="ChEBI" id="CHEBI:29035"/>
    </cofactor>
    <text evidence="1">Binds 2 manganese ions per subunit.</text>
</comment>
<comment type="subcellular location">
    <subcellularLocation>
        <location evidence="1">Cytoplasm</location>
    </subcellularLocation>
</comment>
<comment type="similarity">
    <text evidence="1">Belongs to the peptidase M17 family.</text>
</comment>
<evidence type="ECO:0000255" key="1">
    <source>
        <dbReference type="HAMAP-Rule" id="MF_00181"/>
    </source>
</evidence>
<organism>
    <name type="scientific">Vibrio campbellii (strain ATCC BAA-1116)</name>
    <dbReference type="NCBI Taxonomy" id="2902295"/>
    <lineage>
        <taxon>Bacteria</taxon>
        <taxon>Pseudomonadati</taxon>
        <taxon>Pseudomonadota</taxon>
        <taxon>Gammaproteobacteria</taxon>
        <taxon>Vibrionales</taxon>
        <taxon>Vibrionaceae</taxon>
        <taxon>Vibrio</taxon>
    </lineage>
</organism>
<name>AMPA_VIBC1</name>
<reference key="1">
    <citation type="submission" date="2007-08" db="EMBL/GenBank/DDBJ databases">
        <authorList>
            <consortium name="The Vibrio harveyi Genome Sequencing Project"/>
            <person name="Bassler B."/>
            <person name="Clifton S.W."/>
            <person name="Fulton L."/>
            <person name="Delehaunty K."/>
            <person name="Fronick C."/>
            <person name="Harrison M."/>
            <person name="Markivic C."/>
            <person name="Fulton R."/>
            <person name="Tin-Wollam A.-M."/>
            <person name="Shah N."/>
            <person name="Pepin K."/>
            <person name="Nash W."/>
            <person name="Thiruvilangam P."/>
            <person name="Bhonagiri V."/>
            <person name="Waters C."/>
            <person name="Tu K.C."/>
            <person name="Irgon J."/>
            <person name="Wilson R.K."/>
        </authorList>
    </citation>
    <scope>NUCLEOTIDE SEQUENCE [LARGE SCALE GENOMIC DNA]</scope>
    <source>
        <strain>ATCC BAA-1116 / BB120</strain>
    </source>
</reference>
<keyword id="KW-0031">Aminopeptidase</keyword>
<keyword id="KW-0963">Cytoplasm</keyword>
<keyword id="KW-0378">Hydrolase</keyword>
<keyword id="KW-0464">Manganese</keyword>
<keyword id="KW-0479">Metal-binding</keyword>
<keyword id="KW-0645">Protease</keyword>
<protein>
    <recommendedName>
        <fullName evidence="1">Probable cytosol aminopeptidase</fullName>
        <ecNumber evidence="1">3.4.11.1</ecNumber>
    </recommendedName>
    <alternativeName>
        <fullName evidence="1">Leucine aminopeptidase</fullName>
        <shortName evidence="1">LAP</shortName>
        <ecNumber evidence="1">3.4.11.10</ecNumber>
    </alternativeName>
    <alternativeName>
        <fullName evidence="1">Leucyl aminopeptidase</fullName>
    </alternativeName>
</protein>
<proteinExistence type="inferred from homology"/>
<sequence>MEFSVKSGSPEKQRSACIVVGVFEPRRLSPVAEQLDKISDGYISSLLRRGDLEGKPGQMLLLHQVPGVLSERVLLVGCGKERELGERQYKEIIQKTISTLNETGSMEAVCFLTELHVKGRDTYWKVRQAVEATKDGLYTFDQFKSVKPETRRPLRKLVFNVPTRRELNLGEKAITHGLAIASGVKASKDLGNMPPNIANPAYLASQARRLADDYETVSTKIIGEQEMEKLGMTSYLAVGRGSKNESMMSIIEYKGNPESEAKPIVLVGKGLTFDSGGISLKPGEGMDEMKYDMCGAASVFGTMKALAKLNLPINVIGVLAGCENMPGSNAYRPGDILTTMSGQTVEVLNTDAEGRLVLCDALTYVERFEPDCVVDVATLTGACVIALGHHISGVISNHNPLSHELVNASEQASDRAWRLPMADEYHEQLKSPFADMANIGGRPAGTITAGCFLSKFAKKYNWAHLDIAGTAWKSGAAKGSTGRPVSMLVQFLLNRSGQETEE</sequence>
<accession>A7MSE5</accession>
<gene>
    <name evidence="1" type="primary">pepA</name>
    <name type="ordered locus">VIBHAR_03635</name>
</gene>